<reference key="1">
    <citation type="submission" date="2005-08" db="EMBL/GenBank/DDBJ databases">
        <authorList>
            <consortium name="NIH - Mammalian Gene Collection (MGC) project"/>
        </authorList>
    </citation>
    <scope>NUCLEOTIDE SEQUENCE [LARGE SCALE MRNA]</scope>
    <source>
        <strain>Crossbred X Angus</strain>
        <tissue>Ileum</tissue>
    </source>
</reference>
<keyword id="KW-0256">Endoplasmic reticulum</keyword>
<keyword id="KW-0472">Membrane</keyword>
<keyword id="KW-1185">Reference proteome</keyword>
<keyword id="KW-0812">Transmembrane</keyword>
<keyword id="KW-1133">Transmembrane helix</keyword>
<proteinExistence type="inferred from homology"/>
<sequence>MTKLAQWLWALALLGSTWAALTMGALGLELPSSCREVLWPLPAYLLVSAGCYALGTVGYRVATFHDCEDAARELQSQIQEARADLTRRGLRF</sequence>
<feature type="chain" id="PRO_0000328450" description="Dolichol-phosphate mannosyltransferase subunit 3">
    <location>
        <begin position="1"/>
        <end position="92"/>
    </location>
</feature>
<feature type="transmembrane region" description="Helical" evidence="3">
    <location>
        <begin position="8"/>
        <end position="28"/>
    </location>
</feature>
<feature type="transmembrane region" description="Helical" evidence="3">
    <location>
        <begin position="37"/>
        <end position="57"/>
    </location>
</feature>
<accession>Q3ZC71</accession>
<gene>
    <name type="primary">DPM3</name>
</gene>
<comment type="function">
    <text evidence="1">Stabilizer subunit of the dolichol-phosphate mannose (DPM) synthase complex; tethers catalytic subunit DPM1 to the endoplasmic reticulum.</text>
</comment>
<comment type="pathway">
    <text>Protein modification; protein glycosylation.</text>
</comment>
<comment type="subunit">
    <text evidence="2">Component of the dolichol-phosphate mannose (DPM) synthase complex composed of DPM1, DPM2 and DPM3; within the complex, associates with DPM1 via its C-terminal domain and with DPM2 via its N-terminal portion. This interaction stabilizes DPM1 protein.</text>
</comment>
<comment type="subcellular location">
    <subcellularLocation>
        <location evidence="1">Endoplasmic reticulum membrane</location>
        <topology evidence="1">Multi-pass membrane protein</topology>
    </subcellularLocation>
</comment>
<comment type="similarity">
    <text evidence="4">Belongs to the DPM3 family.</text>
</comment>
<name>DPM3_BOVIN</name>
<evidence type="ECO:0000250" key="1"/>
<evidence type="ECO:0000250" key="2">
    <source>
        <dbReference type="UniProtKB" id="Q9P2X0"/>
    </source>
</evidence>
<evidence type="ECO:0000255" key="3"/>
<evidence type="ECO:0000305" key="4"/>
<protein>
    <recommendedName>
        <fullName>Dolichol-phosphate mannosyltransferase subunit 3</fullName>
    </recommendedName>
    <alternativeName>
        <fullName>Dolichol-phosphate mannose synthase subunit 3</fullName>
        <shortName>DPM synthase subunit 3</shortName>
    </alternativeName>
    <alternativeName>
        <fullName>Dolichyl-phosphate beta-D-mannosyltransferase subunit 3</fullName>
    </alternativeName>
    <alternativeName>
        <fullName>Mannose-P-dolichol synthase subunit 3</fullName>
        <shortName>MPD synthase subunit 3</shortName>
    </alternativeName>
</protein>
<dbReference type="EMBL" id="BC102881">
    <property type="protein sequence ID" value="AAI02882.1"/>
    <property type="molecule type" value="mRNA"/>
</dbReference>
<dbReference type="RefSeq" id="NP_001029532.1">
    <property type="nucleotide sequence ID" value="NM_001034360.1"/>
</dbReference>
<dbReference type="SMR" id="Q3ZC71"/>
<dbReference type="FunCoup" id="Q3ZC71">
    <property type="interactions" value="898"/>
</dbReference>
<dbReference type="STRING" id="9913.ENSBTAP00000004597"/>
<dbReference type="PaxDb" id="9913-ENSBTAP00000004597"/>
<dbReference type="Ensembl" id="ENSBTAT00000004597.4">
    <property type="protein sequence ID" value="ENSBTAP00000004597.3"/>
    <property type="gene ID" value="ENSBTAG00000003535.4"/>
</dbReference>
<dbReference type="GeneID" id="509745"/>
<dbReference type="KEGG" id="bta:509745"/>
<dbReference type="CTD" id="54344"/>
<dbReference type="VEuPathDB" id="HostDB:ENSBTAG00000003535"/>
<dbReference type="VGNC" id="VGNC:28185">
    <property type="gene designation" value="DPM3"/>
</dbReference>
<dbReference type="eggNOG" id="KOG4841">
    <property type="taxonomic scope" value="Eukaryota"/>
</dbReference>
<dbReference type="GeneTree" id="ENSGT00390000008892"/>
<dbReference type="HOGENOM" id="CLU_150782_0_1_1"/>
<dbReference type="InParanoid" id="Q3ZC71"/>
<dbReference type="OMA" id="KLMQWLF"/>
<dbReference type="OrthoDB" id="2014333at2759"/>
<dbReference type="TreeFam" id="TF300274"/>
<dbReference type="Reactome" id="R-BTA-162699">
    <property type="pathway name" value="Synthesis of dolichyl-phosphate mannose"/>
</dbReference>
<dbReference type="UniPathway" id="UPA00378"/>
<dbReference type="Proteomes" id="UP000009136">
    <property type="component" value="Chromosome 3"/>
</dbReference>
<dbReference type="Bgee" id="ENSBTAG00000003535">
    <property type="expression patterns" value="Expressed in ileocecal valve and 113 other cell types or tissues"/>
</dbReference>
<dbReference type="GO" id="GO:0033185">
    <property type="term" value="C:dolichol-phosphate-mannose synthase complex"/>
    <property type="evidence" value="ECO:0000318"/>
    <property type="project" value="GO_Central"/>
</dbReference>
<dbReference type="GO" id="GO:0005789">
    <property type="term" value="C:endoplasmic reticulum membrane"/>
    <property type="evidence" value="ECO:0000318"/>
    <property type="project" value="GO_Central"/>
</dbReference>
<dbReference type="GO" id="GO:0008047">
    <property type="term" value="F:enzyme activator activity"/>
    <property type="evidence" value="ECO:0007669"/>
    <property type="project" value="Ensembl"/>
</dbReference>
<dbReference type="GO" id="GO:0019348">
    <property type="term" value="P:dolichol metabolic process"/>
    <property type="evidence" value="ECO:0007669"/>
    <property type="project" value="Ensembl"/>
</dbReference>
<dbReference type="GO" id="GO:0006506">
    <property type="term" value="P:GPI anchor biosynthetic process"/>
    <property type="evidence" value="ECO:0000318"/>
    <property type="project" value="GO_Central"/>
</dbReference>
<dbReference type="GO" id="GO:0006486">
    <property type="term" value="P:protein glycosylation"/>
    <property type="evidence" value="ECO:0007669"/>
    <property type="project" value="UniProtKB-UniPathway"/>
</dbReference>
<dbReference type="GO" id="GO:0031647">
    <property type="term" value="P:regulation of protein stability"/>
    <property type="evidence" value="ECO:0007669"/>
    <property type="project" value="Ensembl"/>
</dbReference>
<dbReference type="InterPro" id="IPR013174">
    <property type="entry name" value="DPM3"/>
</dbReference>
<dbReference type="PANTHER" id="PTHR16433">
    <property type="entry name" value="DOLICHOL-PHOSPHATE MANNOSYLTRANSFERASE SUBUNIT 3"/>
    <property type="match status" value="1"/>
</dbReference>
<dbReference type="PANTHER" id="PTHR16433:SF0">
    <property type="entry name" value="DOLICHOL-PHOSPHATE MANNOSYLTRANSFERASE SUBUNIT 3"/>
    <property type="match status" value="1"/>
</dbReference>
<dbReference type="Pfam" id="PF08285">
    <property type="entry name" value="DPM3"/>
    <property type="match status" value="1"/>
</dbReference>
<organism>
    <name type="scientific">Bos taurus</name>
    <name type="common">Bovine</name>
    <dbReference type="NCBI Taxonomy" id="9913"/>
    <lineage>
        <taxon>Eukaryota</taxon>
        <taxon>Metazoa</taxon>
        <taxon>Chordata</taxon>
        <taxon>Craniata</taxon>
        <taxon>Vertebrata</taxon>
        <taxon>Euteleostomi</taxon>
        <taxon>Mammalia</taxon>
        <taxon>Eutheria</taxon>
        <taxon>Laurasiatheria</taxon>
        <taxon>Artiodactyla</taxon>
        <taxon>Ruminantia</taxon>
        <taxon>Pecora</taxon>
        <taxon>Bovidae</taxon>
        <taxon>Bovinae</taxon>
        <taxon>Bos</taxon>
    </lineage>
</organism>